<protein>
    <recommendedName>
        <fullName evidence="1">Diaminopimelate epimerase</fullName>
        <shortName evidence="1">DAP epimerase</shortName>
        <ecNumber evidence="1">5.1.1.7</ecNumber>
    </recommendedName>
    <alternativeName>
        <fullName evidence="1">PLP-independent amino acid racemase</fullName>
    </alternativeName>
</protein>
<reference key="1">
    <citation type="journal article" date="2007" name="Science">
        <title>Legumes symbioses: absence of nod genes in photosynthetic bradyrhizobia.</title>
        <authorList>
            <person name="Giraud E."/>
            <person name="Moulin L."/>
            <person name="Vallenet D."/>
            <person name="Barbe V."/>
            <person name="Cytryn E."/>
            <person name="Avarre J.-C."/>
            <person name="Jaubert M."/>
            <person name="Simon D."/>
            <person name="Cartieaux F."/>
            <person name="Prin Y."/>
            <person name="Bena G."/>
            <person name="Hannibal L."/>
            <person name="Fardoux J."/>
            <person name="Kojadinovic M."/>
            <person name="Vuillet L."/>
            <person name="Lajus A."/>
            <person name="Cruveiller S."/>
            <person name="Rouy Z."/>
            <person name="Mangenot S."/>
            <person name="Segurens B."/>
            <person name="Dossat C."/>
            <person name="Franck W.L."/>
            <person name="Chang W.-S."/>
            <person name="Saunders E."/>
            <person name="Bruce D."/>
            <person name="Richardson P."/>
            <person name="Normand P."/>
            <person name="Dreyfus B."/>
            <person name="Pignol D."/>
            <person name="Stacey G."/>
            <person name="Emerich D."/>
            <person name="Vermeglio A."/>
            <person name="Medigue C."/>
            <person name="Sadowsky M."/>
        </authorList>
    </citation>
    <scope>NUCLEOTIDE SEQUENCE [LARGE SCALE GENOMIC DNA]</scope>
    <source>
        <strain>BTAi1 / ATCC BAA-1182</strain>
    </source>
</reference>
<name>DAPF_BRASB</name>
<keyword id="KW-0028">Amino-acid biosynthesis</keyword>
<keyword id="KW-0963">Cytoplasm</keyword>
<keyword id="KW-0413">Isomerase</keyword>
<keyword id="KW-0457">Lysine biosynthesis</keyword>
<keyword id="KW-1185">Reference proteome</keyword>
<organism>
    <name type="scientific">Bradyrhizobium sp. (strain BTAi1 / ATCC BAA-1182)</name>
    <dbReference type="NCBI Taxonomy" id="288000"/>
    <lineage>
        <taxon>Bacteria</taxon>
        <taxon>Pseudomonadati</taxon>
        <taxon>Pseudomonadota</taxon>
        <taxon>Alphaproteobacteria</taxon>
        <taxon>Hyphomicrobiales</taxon>
        <taxon>Nitrobacteraceae</taxon>
        <taxon>Bradyrhizobium</taxon>
    </lineage>
</organism>
<sequence>MSALANHSFVKMNGIGNEIVVLDLRDVKHVVTPDEARAVAARVPYDQLMVLQPPRLDGTEAFIRIYNNDGSESGACGNGMRCVVRQVFEKTGQASATFETRAGLLNCWQGPAPDLYTVDMGVPKFGWQEIPLAEEFRDTRYIELQIGPIDAPILHSPSVVNMGNPHAVFWVDGDVNSYDLERFGPLLENHPIFPERANITLAHIVDRDHITMRTWERGAGLTKACGSAACATAVAAARLKRANRIVQMTLPGGELTIEWRERDDHVLMTGTATFEFEGRFEPQLFASVA</sequence>
<comment type="function">
    <text evidence="1">Catalyzes the stereoinversion of LL-2,6-diaminopimelate (L,L-DAP) to meso-diaminopimelate (meso-DAP), a precursor of L-lysine and an essential component of the bacterial peptidoglycan.</text>
</comment>
<comment type="catalytic activity">
    <reaction evidence="1">
        <text>(2S,6S)-2,6-diaminopimelate = meso-2,6-diaminopimelate</text>
        <dbReference type="Rhea" id="RHEA:15393"/>
        <dbReference type="ChEBI" id="CHEBI:57609"/>
        <dbReference type="ChEBI" id="CHEBI:57791"/>
        <dbReference type="EC" id="5.1.1.7"/>
    </reaction>
</comment>
<comment type="pathway">
    <text evidence="1">Amino-acid biosynthesis; L-lysine biosynthesis via DAP pathway; DL-2,6-diaminopimelate from LL-2,6-diaminopimelate: step 1/1.</text>
</comment>
<comment type="subunit">
    <text evidence="1">Homodimer.</text>
</comment>
<comment type="subcellular location">
    <subcellularLocation>
        <location evidence="1">Cytoplasm</location>
    </subcellularLocation>
</comment>
<comment type="similarity">
    <text evidence="1">Belongs to the diaminopimelate epimerase family.</text>
</comment>
<accession>A5E915</accession>
<gene>
    <name evidence="1" type="primary">dapF</name>
    <name type="ordered locus">BBta_0372</name>
</gene>
<feature type="chain" id="PRO_1000011848" description="Diaminopimelate epimerase">
    <location>
        <begin position="1"/>
        <end position="289"/>
    </location>
</feature>
<feature type="active site" description="Proton donor" evidence="1">
    <location>
        <position position="76"/>
    </location>
</feature>
<feature type="active site" description="Proton acceptor" evidence="1">
    <location>
        <position position="225"/>
    </location>
</feature>
<feature type="binding site" evidence="1">
    <location>
        <position position="17"/>
    </location>
    <ligand>
        <name>substrate</name>
    </ligand>
</feature>
<feature type="binding site" evidence="1">
    <location>
        <position position="47"/>
    </location>
    <ligand>
        <name>substrate</name>
    </ligand>
</feature>
<feature type="binding site" evidence="1">
    <location>
        <position position="67"/>
    </location>
    <ligand>
        <name>substrate</name>
    </ligand>
</feature>
<feature type="binding site" evidence="1">
    <location>
        <begin position="77"/>
        <end position="78"/>
    </location>
    <ligand>
        <name>substrate</name>
    </ligand>
</feature>
<feature type="binding site" evidence="1">
    <location>
        <position position="164"/>
    </location>
    <ligand>
        <name>substrate</name>
    </ligand>
</feature>
<feature type="binding site" evidence="1">
    <location>
        <position position="198"/>
    </location>
    <ligand>
        <name>substrate</name>
    </ligand>
</feature>
<feature type="binding site" evidence="1">
    <location>
        <begin position="216"/>
        <end position="217"/>
    </location>
    <ligand>
        <name>substrate</name>
    </ligand>
</feature>
<feature type="binding site" evidence="1">
    <location>
        <begin position="226"/>
        <end position="227"/>
    </location>
    <ligand>
        <name>substrate</name>
    </ligand>
</feature>
<feature type="site" description="Could be important to modulate the pK values of the two catalytic cysteine residues" evidence="1">
    <location>
        <position position="166"/>
    </location>
</feature>
<feature type="site" description="Could be important to modulate the pK values of the two catalytic cysteine residues" evidence="1">
    <location>
        <position position="216"/>
    </location>
</feature>
<dbReference type="EC" id="5.1.1.7" evidence="1"/>
<dbReference type="EMBL" id="CP000494">
    <property type="protein sequence ID" value="ABQ32659.1"/>
    <property type="molecule type" value="Genomic_DNA"/>
</dbReference>
<dbReference type="RefSeq" id="WP_012040712.1">
    <property type="nucleotide sequence ID" value="NC_009485.1"/>
</dbReference>
<dbReference type="SMR" id="A5E915"/>
<dbReference type="STRING" id="288000.BBta_0372"/>
<dbReference type="KEGG" id="bbt:BBta_0372"/>
<dbReference type="eggNOG" id="COG0253">
    <property type="taxonomic scope" value="Bacteria"/>
</dbReference>
<dbReference type="HOGENOM" id="CLU_053306_1_0_5"/>
<dbReference type="OrthoDB" id="9805408at2"/>
<dbReference type="UniPathway" id="UPA00034">
    <property type="reaction ID" value="UER00025"/>
</dbReference>
<dbReference type="Proteomes" id="UP000000246">
    <property type="component" value="Chromosome"/>
</dbReference>
<dbReference type="GO" id="GO:0005829">
    <property type="term" value="C:cytosol"/>
    <property type="evidence" value="ECO:0007669"/>
    <property type="project" value="TreeGrafter"/>
</dbReference>
<dbReference type="GO" id="GO:0008837">
    <property type="term" value="F:diaminopimelate epimerase activity"/>
    <property type="evidence" value="ECO:0007669"/>
    <property type="project" value="UniProtKB-UniRule"/>
</dbReference>
<dbReference type="GO" id="GO:0009089">
    <property type="term" value="P:lysine biosynthetic process via diaminopimelate"/>
    <property type="evidence" value="ECO:0007669"/>
    <property type="project" value="UniProtKB-UniRule"/>
</dbReference>
<dbReference type="FunFam" id="3.10.310.10:FF:000004">
    <property type="entry name" value="Diaminopimelate epimerase"/>
    <property type="match status" value="1"/>
</dbReference>
<dbReference type="Gene3D" id="3.10.310.10">
    <property type="entry name" value="Diaminopimelate Epimerase, Chain A, domain 1"/>
    <property type="match status" value="2"/>
</dbReference>
<dbReference type="HAMAP" id="MF_00197">
    <property type="entry name" value="DAP_epimerase"/>
    <property type="match status" value="1"/>
</dbReference>
<dbReference type="InterPro" id="IPR018510">
    <property type="entry name" value="DAP_epimerase_AS"/>
</dbReference>
<dbReference type="InterPro" id="IPR001653">
    <property type="entry name" value="DAP_epimerase_DapF"/>
</dbReference>
<dbReference type="NCBIfam" id="TIGR00652">
    <property type="entry name" value="DapF"/>
    <property type="match status" value="1"/>
</dbReference>
<dbReference type="PANTHER" id="PTHR31689:SF0">
    <property type="entry name" value="DIAMINOPIMELATE EPIMERASE"/>
    <property type="match status" value="1"/>
</dbReference>
<dbReference type="PANTHER" id="PTHR31689">
    <property type="entry name" value="DIAMINOPIMELATE EPIMERASE, CHLOROPLASTIC"/>
    <property type="match status" value="1"/>
</dbReference>
<dbReference type="Pfam" id="PF01678">
    <property type="entry name" value="DAP_epimerase"/>
    <property type="match status" value="2"/>
</dbReference>
<dbReference type="SUPFAM" id="SSF54506">
    <property type="entry name" value="Diaminopimelate epimerase-like"/>
    <property type="match status" value="2"/>
</dbReference>
<dbReference type="PROSITE" id="PS01326">
    <property type="entry name" value="DAP_EPIMERASE"/>
    <property type="match status" value="1"/>
</dbReference>
<evidence type="ECO:0000255" key="1">
    <source>
        <dbReference type="HAMAP-Rule" id="MF_00197"/>
    </source>
</evidence>
<proteinExistence type="inferred from homology"/>